<comment type="function">
    <text evidence="1">Modulates RecA activity.</text>
</comment>
<comment type="subcellular location">
    <subcellularLocation>
        <location evidence="1">Cytoplasm</location>
    </subcellularLocation>
</comment>
<comment type="similarity">
    <text evidence="1">Belongs to the RecX family.</text>
</comment>
<dbReference type="EMBL" id="CP000416">
    <property type="protein sequence ID" value="ABJ64648.1"/>
    <property type="molecule type" value="Genomic_DNA"/>
</dbReference>
<dbReference type="SMR" id="Q03Q74"/>
<dbReference type="STRING" id="387344.LVIS_1570"/>
<dbReference type="KEGG" id="lbr:LVIS_1570"/>
<dbReference type="eggNOG" id="COG2137">
    <property type="taxonomic scope" value="Bacteria"/>
</dbReference>
<dbReference type="HOGENOM" id="CLU_066607_4_0_9"/>
<dbReference type="Proteomes" id="UP000001652">
    <property type="component" value="Chromosome"/>
</dbReference>
<dbReference type="GO" id="GO:0005737">
    <property type="term" value="C:cytoplasm"/>
    <property type="evidence" value="ECO:0007669"/>
    <property type="project" value="UniProtKB-SubCell"/>
</dbReference>
<dbReference type="GO" id="GO:0006282">
    <property type="term" value="P:regulation of DNA repair"/>
    <property type="evidence" value="ECO:0007669"/>
    <property type="project" value="UniProtKB-UniRule"/>
</dbReference>
<dbReference type="Gene3D" id="1.10.10.10">
    <property type="entry name" value="Winged helix-like DNA-binding domain superfamily/Winged helix DNA-binding domain"/>
    <property type="match status" value="4"/>
</dbReference>
<dbReference type="HAMAP" id="MF_01114">
    <property type="entry name" value="RecX"/>
    <property type="match status" value="1"/>
</dbReference>
<dbReference type="InterPro" id="IPR053926">
    <property type="entry name" value="RecX_HTH_1st"/>
</dbReference>
<dbReference type="InterPro" id="IPR053924">
    <property type="entry name" value="RecX_HTH_2nd"/>
</dbReference>
<dbReference type="InterPro" id="IPR053925">
    <property type="entry name" value="RecX_HTH_3rd"/>
</dbReference>
<dbReference type="InterPro" id="IPR003783">
    <property type="entry name" value="Regulatory_RecX"/>
</dbReference>
<dbReference type="InterPro" id="IPR036388">
    <property type="entry name" value="WH-like_DNA-bd_sf"/>
</dbReference>
<dbReference type="NCBIfam" id="NF010733">
    <property type="entry name" value="PRK14135.1"/>
    <property type="match status" value="1"/>
</dbReference>
<dbReference type="PANTHER" id="PTHR33602">
    <property type="entry name" value="REGULATORY PROTEIN RECX FAMILY PROTEIN"/>
    <property type="match status" value="1"/>
</dbReference>
<dbReference type="PANTHER" id="PTHR33602:SF1">
    <property type="entry name" value="REGULATORY PROTEIN RECX FAMILY PROTEIN"/>
    <property type="match status" value="1"/>
</dbReference>
<dbReference type="Pfam" id="PF21982">
    <property type="entry name" value="RecX_HTH1"/>
    <property type="match status" value="1"/>
</dbReference>
<dbReference type="Pfam" id="PF02631">
    <property type="entry name" value="RecX_HTH2"/>
    <property type="match status" value="1"/>
</dbReference>
<dbReference type="Pfam" id="PF21981">
    <property type="entry name" value="RecX_HTH3"/>
    <property type="match status" value="1"/>
</dbReference>
<gene>
    <name evidence="1" type="primary">recX</name>
    <name type="ordered locus">LVIS_1570</name>
</gene>
<protein>
    <recommendedName>
        <fullName evidence="1">Regulatory protein RecX</fullName>
    </recommendedName>
</protein>
<organism>
    <name type="scientific">Levilactobacillus brevis (strain ATCC 367 / BCRC 12310 / CIP 105137 / JCM 1170 / LMG 11437 / NCIMB 947 / NCTC 947)</name>
    <name type="common">Lactobacillus brevis</name>
    <dbReference type="NCBI Taxonomy" id="387344"/>
    <lineage>
        <taxon>Bacteria</taxon>
        <taxon>Bacillati</taxon>
        <taxon>Bacillota</taxon>
        <taxon>Bacilli</taxon>
        <taxon>Lactobacillales</taxon>
        <taxon>Lactobacillaceae</taxon>
        <taxon>Levilactobacillus</taxon>
    </lineage>
</organism>
<feature type="chain" id="PRO_1000084980" description="Regulatory protein RecX">
    <location>
        <begin position="1"/>
        <end position="266"/>
    </location>
</feature>
<keyword id="KW-0963">Cytoplasm</keyword>
<keyword id="KW-1185">Reference proteome</keyword>
<accession>Q03Q74</accession>
<sequence>MAVITMIEAQKRSGRYNVYLDGAYAFPVSESVLVDFRLAKGMEVDKALTAQLIDADNVAKAYNRALDYLSQQLRTEKEVRDKLADLEIPAETIAATLQRLRSLALVDDAHYAASYVRTMMHTGDKGPRVIRQNLRHKGVLEQPIDEALTLYTTEEQLTVGTAVAAKLAKRYQRQPFGTQQQKIRQGLLTRGFDNDLATKMLATLDLTPDEDEQWALLVKQGEKLWHRYRTLSMRERQYKTKQALYRKGFNLDDISRWLADLGESAQ</sequence>
<evidence type="ECO:0000255" key="1">
    <source>
        <dbReference type="HAMAP-Rule" id="MF_01114"/>
    </source>
</evidence>
<name>RECX_LEVBA</name>
<proteinExistence type="inferred from homology"/>
<reference key="1">
    <citation type="journal article" date="2006" name="Proc. Natl. Acad. Sci. U.S.A.">
        <title>Comparative genomics of the lactic acid bacteria.</title>
        <authorList>
            <person name="Makarova K.S."/>
            <person name="Slesarev A."/>
            <person name="Wolf Y.I."/>
            <person name="Sorokin A."/>
            <person name="Mirkin B."/>
            <person name="Koonin E.V."/>
            <person name="Pavlov A."/>
            <person name="Pavlova N."/>
            <person name="Karamychev V."/>
            <person name="Polouchine N."/>
            <person name="Shakhova V."/>
            <person name="Grigoriev I."/>
            <person name="Lou Y."/>
            <person name="Rohksar D."/>
            <person name="Lucas S."/>
            <person name="Huang K."/>
            <person name="Goodstein D.M."/>
            <person name="Hawkins T."/>
            <person name="Plengvidhya V."/>
            <person name="Welker D."/>
            <person name="Hughes J."/>
            <person name="Goh Y."/>
            <person name="Benson A."/>
            <person name="Baldwin K."/>
            <person name="Lee J.-H."/>
            <person name="Diaz-Muniz I."/>
            <person name="Dosti B."/>
            <person name="Smeianov V."/>
            <person name="Wechter W."/>
            <person name="Barabote R."/>
            <person name="Lorca G."/>
            <person name="Altermann E."/>
            <person name="Barrangou R."/>
            <person name="Ganesan B."/>
            <person name="Xie Y."/>
            <person name="Rawsthorne H."/>
            <person name="Tamir D."/>
            <person name="Parker C."/>
            <person name="Breidt F."/>
            <person name="Broadbent J.R."/>
            <person name="Hutkins R."/>
            <person name="O'Sullivan D."/>
            <person name="Steele J."/>
            <person name="Unlu G."/>
            <person name="Saier M.H. Jr."/>
            <person name="Klaenhammer T."/>
            <person name="Richardson P."/>
            <person name="Kozyavkin S."/>
            <person name="Weimer B.C."/>
            <person name="Mills D.A."/>
        </authorList>
    </citation>
    <scope>NUCLEOTIDE SEQUENCE [LARGE SCALE GENOMIC DNA]</scope>
    <source>
        <strain>ATCC 367 / BCRC 12310 / CIP 105137 / JCM 1170 / LMG 11437 / NCIMB 947 / NCTC 947</strain>
    </source>
</reference>